<name>CH10_STRMK</name>
<protein>
    <recommendedName>
        <fullName evidence="1">Co-chaperonin GroES</fullName>
    </recommendedName>
    <alternativeName>
        <fullName evidence="1">10 kDa chaperonin</fullName>
    </alternativeName>
    <alternativeName>
        <fullName evidence="1">Chaperonin-10</fullName>
        <shortName evidence="1">Cpn10</shortName>
    </alternativeName>
</protein>
<keyword id="KW-0143">Chaperone</keyword>
<keyword id="KW-0963">Cytoplasm</keyword>
<keyword id="KW-1185">Reference proteome</keyword>
<accession>B2FIV0</accession>
<feature type="chain" id="PRO_1000129711" description="Co-chaperonin GroES">
    <location>
        <begin position="1"/>
        <end position="95"/>
    </location>
</feature>
<dbReference type="EMBL" id="AM743169">
    <property type="protein sequence ID" value="CAQ47605.1"/>
    <property type="molecule type" value="Genomic_DNA"/>
</dbReference>
<dbReference type="RefSeq" id="WP_005411227.1">
    <property type="nucleotide sequence ID" value="NC_010943.1"/>
</dbReference>
<dbReference type="SMR" id="B2FIV0"/>
<dbReference type="EnsemblBacteria" id="CAQ47605">
    <property type="protein sequence ID" value="CAQ47605"/>
    <property type="gene ID" value="Smlt4215"/>
</dbReference>
<dbReference type="KEGG" id="sml:Smlt4215"/>
<dbReference type="eggNOG" id="COG0234">
    <property type="taxonomic scope" value="Bacteria"/>
</dbReference>
<dbReference type="HOGENOM" id="CLU_132825_2_0_6"/>
<dbReference type="Proteomes" id="UP000008840">
    <property type="component" value="Chromosome"/>
</dbReference>
<dbReference type="GO" id="GO:0005737">
    <property type="term" value="C:cytoplasm"/>
    <property type="evidence" value="ECO:0007669"/>
    <property type="project" value="UniProtKB-SubCell"/>
</dbReference>
<dbReference type="GO" id="GO:0005524">
    <property type="term" value="F:ATP binding"/>
    <property type="evidence" value="ECO:0007669"/>
    <property type="project" value="InterPro"/>
</dbReference>
<dbReference type="GO" id="GO:0046872">
    <property type="term" value="F:metal ion binding"/>
    <property type="evidence" value="ECO:0007669"/>
    <property type="project" value="TreeGrafter"/>
</dbReference>
<dbReference type="GO" id="GO:0044183">
    <property type="term" value="F:protein folding chaperone"/>
    <property type="evidence" value="ECO:0007669"/>
    <property type="project" value="InterPro"/>
</dbReference>
<dbReference type="GO" id="GO:0051087">
    <property type="term" value="F:protein-folding chaperone binding"/>
    <property type="evidence" value="ECO:0007669"/>
    <property type="project" value="TreeGrafter"/>
</dbReference>
<dbReference type="GO" id="GO:0051082">
    <property type="term" value="F:unfolded protein binding"/>
    <property type="evidence" value="ECO:0007669"/>
    <property type="project" value="TreeGrafter"/>
</dbReference>
<dbReference type="GO" id="GO:0051085">
    <property type="term" value="P:chaperone cofactor-dependent protein refolding"/>
    <property type="evidence" value="ECO:0007669"/>
    <property type="project" value="TreeGrafter"/>
</dbReference>
<dbReference type="CDD" id="cd00320">
    <property type="entry name" value="cpn10"/>
    <property type="match status" value="1"/>
</dbReference>
<dbReference type="FunFam" id="2.30.33.40:FF:000001">
    <property type="entry name" value="10 kDa chaperonin"/>
    <property type="match status" value="1"/>
</dbReference>
<dbReference type="Gene3D" id="2.30.33.40">
    <property type="entry name" value="GroES chaperonin"/>
    <property type="match status" value="1"/>
</dbReference>
<dbReference type="HAMAP" id="MF_00580">
    <property type="entry name" value="CH10"/>
    <property type="match status" value="1"/>
</dbReference>
<dbReference type="InterPro" id="IPR020818">
    <property type="entry name" value="Chaperonin_GroES"/>
</dbReference>
<dbReference type="InterPro" id="IPR037124">
    <property type="entry name" value="Chaperonin_GroES_sf"/>
</dbReference>
<dbReference type="InterPro" id="IPR018369">
    <property type="entry name" value="Chaprnonin_Cpn10_CS"/>
</dbReference>
<dbReference type="InterPro" id="IPR011032">
    <property type="entry name" value="GroES-like_sf"/>
</dbReference>
<dbReference type="NCBIfam" id="NF001527">
    <property type="entry name" value="PRK00364.1-2"/>
    <property type="match status" value="1"/>
</dbReference>
<dbReference type="NCBIfam" id="NF001531">
    <property type="entry name" value="PRK00364.2-2"/>
    <property type="match status" value="1"/>
</dbReference>
<dbReference type="NCBIfam" id="NF001533">
    <property type="entry name" value="PRK00364.2-4"/>
    <property type="match status" value="1"/>
</dbReference>
<dbReference type="PANTHER" id="PTHR10772">
    <property type="entry name" value="10 KDA HEAT SHOCK PROTEIN"/>
    <property type="match status" value="1"/>
</dbReference>
<dbReference type="PANTHER" id="PTHR10772:SF58">
    <property type="entry name" value="CO-CHAPERONIN GROES"/>
    <property type="match status" value="1"/>
</dbReference>
<dbReference type="Pfam" id="PF00166">
    <property type="entry name" value="Cpn10"/>
    <property type="match status" value="1"/>
</dbReference>
<dbReference type="PRINTS" id="PR00297">
    <property type="entry name" value="CHAPERONIN10"/>
</dbReference>
<dbReference type="SMART" id="SM00883">
    <property type="entry name" value="Cpn10"/>
    <property type="match status" value="1"/>
</dbReference>
<dbReference type="SUPFAM" id="SSF50129">
    <property type="entry name" value="GroES-like"/>
    <property type="match status" value="1"/>
</dbReference>
<dbReference type="PROSITE" id="PS00681">
    <property type="entry name" value="CHAPERONINS_CPN10"/>
    <property type="match status" value="1"/>
</dbReference>
<proteinExistence type="inferred from homology"/>
<sequence length="95" mass="10006">MSIKPLHDRVVVKPIEADEISAGGIVIPDSAKEKSTKGEVVAVGPGKPLDNGNVRAPSLKVGDKVIYGQYAGSSYKSEGVEYKVLREDDVLAVIG</sequence>
<evidence type="ECO:0000255" key="1">
    <source>
        <dbReference type="HAMAP-Rule" id="MF_00580"/>
    </source>
</evidence>
<reference key="1">
    <citation type="journal article" date="2008" name="Genome Biol.">
        <title>The complete genome, comparative and functional analysis of Stenotrophomonas maltophilia reveals an organism heavily shielded by drug resistance determinants.</title>
        <authorList>
            <person name="Crossman L.C."/>
            <person name="Gould V.C."/>
            <person name="Dow J.M."/>
            <person name="Vernikos G.S."/>
            <person name="Okazaki A."/>
            <person name="Sebaihia M."/>
            <person name="Saunders D."/>
            <person name="Arrowsmith C."/>
            <person name="Carver T."/>
            <person name="Peters N."/>
            <person name="Adlem E."/>
            <person name="Kerhornou A."/>
            <person name="Lord A."/>
            <person name="Murphy L."/>
            <person name="Seeger K."/>
            <person name="Squares R."/>
            <person name="Rutter S."/>
            <person name="Quail M.A."/>
            <person name="Rajandream M.A."/>
            <person name="Harris D."/>
            <person name="Churcher C."/>
            <person name="Bentley S.D."/>
            <person name="Parkhill J."/>
            <person name="Thomson N.R."/>
            <person name="Avison M.B."/>
        </authorList>
    </citation>
    <scope>NUCLEOTIDE SEQUENCE [LARGE SCALE GENOMIC DNA]</scope>
    <source>
        <strain>K279a</strain>
    </source>
</reference>
<comment type="function">
    <text evidence="1">Together with the chaperonin GroEL, plays an essential role in assisting protein folding. The GroEL-GroES system forms a nano-cage that allows encapsulation of the non-native substrate proteins and provides a physical environment optimized to promote and accelerate protein folding. GroES binds to the apical surface of the GroEL ring, thereby capping the opening of the GroEL channel.</text>
</comment>
<comment type="subunit">
    <text evidence="1">Heptamer of 7 subunits arranged in a ring. Interacts with the chaperonin GroEL.</text>
</comment>
<comment type="subcellular location">
    <subcellularLocation>
        <location evidence="1">Cytoplasm</location>
    </subcellularLocation>
</comment>
<comment type="similarity">
    <text evidence="1">Belongs to the GroES chaperonin family.</text>
</comment>
<organism>
    <name type="scientific">Stenotrophomonas maltophilia (strain K279a)</name>
    <dbReference type="NCBI Taxonomy" id="522373"/>
    <lineage>
        <taxon>Bacteria</taxon>
        <taxon>Pseudomonadati</taxon>
        <taxon>Pseudomonadota</taxon>
        <taxon>Gammaproteobacteria</taxon>
        <taxon>Lysobacterales</taxon>
        <taxon>Lysobacteraceae</taxon>
        <taxon>Stenotrophomonas</taxon>
        <taxon>Stenotrophomonas maltophilia group</taxon>
    </lineage>
</organism>
<gene>
    <name evidence="1" type="primary">groES</name>
    <name evidence="1" type="synonym">groS</name>
    <name type="ordered locus">Smlt4215</name>
</gene>